<accession>A5VVW9</accession>
<keyword id="KW-0021">Allosteric enzyme</keyword>
<keyword id="KW-0328">Glycosyltransferase</keyword>
<keyword id="KW-0342">GTP-binding</keyword>
<keyword id="KW-0460">Magnesium</keyword>
<keyword id="KW-0547">Nucleotide-binding</keyword>
<keyword id="KW-0808">Transferase</keyword>
<protein>
    <recommendedName>
        <fullName evidence="1">Uracil phosphoribosyltransferase</fullName>
        <ecNumber evidence="1">2.4.2.9</ecNumber>
    </recommendedName>
    <alternativeName>
        <fullName evidence="1">UMP pyrophosphorylase</fullName>
    </alternativeName>
    <alternativeName>
        <fullName evidence="1">UPRTase</fullName>
    </alternativeName>
</protein>
<reference key="1">
    <citation type="journal article" date="2009" name="PLoS ONE">
        <title>Genome degradation in Brucella ovis corresponds with narrowing of its host range and tissue tropism.</title>
        <authorList>
            <person name="Tsolis R.M."/>
            <person name="Seshadri R."/>
            <person name="Santos R.L."/>
            <person name="Sangari F.J."/>
            <person name="Lobo J.M."/>
            <person name="de Jong M.F."/>
            <person name="Ren Q."/>
            <person name="Myers G."/>
            <person name="Brinkac L.M."/>
            <person name="Nelson W.C."/>
            <person name="Deboy R.T."/>
            <person name="Angiuoli S."/>
            <person name="Khouri H."/>
            <person name="Dimitrov G."/>
            <person name="Robinson J.R."/>
            <person name="Mulligan S."/>
            <person name="Walker R.L."/>
            <person name="Elzer P.E."/>
            <person name="Hassan K.A."/>
            <person name="Paulsen I.T."/>
        </authorList>
    </citation>
    <scope>NUCLEOTIDE SEQUENCE [LARGE SCALE GENOMIC DNA]</scope>
    <source>
        <strain>ATCC 25840 / 63/290 / NCTC 10512</strain>
    </source>
</reference>
<feature type="chain" id="PRO_1000053682" description="Uracil phosphoribosyltransferase">
    <location>
        <begin position="1"/>
        <end position="208"/>
    </location>
</feature>
<feature type="binding site" evidence="1">
    <location>
        <position position="78"/>
    </location>
    <ligand>
        <name>5-phospho-alpha-D-ribose 1-diphosphate</name>
        <dbReference type="ChEBI" id="CHEBI:58017"/>
    </ligand>
</feature>
<feature type="binding site" evidence="1">
    <location>
        <position position="103"/>
    </location>
    <ligand>
        <name>5-phospho-alpha-D-ribose 1-diphosphate</name>
        <dbReference type="ChEBI" id="CHEBI:58017"/>
    </ligand>
</feature>
<feature type="binding site" evidence="1">
    <location>
        <begin position="130"/>
        <end position="138"/>
    </location>
    <ligand>
        <name>5-phospho-alpha-D-ribose 1-diphosphate</name>
        <dbReference type="ChEBI" id="CHEBI:58017"/>
    </ligand>
</feature>
<feature type="binding site" evidence="1">
    <location>
        <position position="193"/>
    </location>
    <ligand>
        <name>uracil</name>
        <dbReference type="ChEBI" id="CHEBI:17568"/>
    </ligand>
</feature>
<feature type="binding site" evidence="1">
    <location>
        <begin position="198"/>
        <end position="200"/>
    </location>
    <ligand>
        <name>uracil</name>
        <dbReference type="ChEBI" id="CHEBI:17568"/>
    </ligand>
</feature>
<feature type="binding site" evidence="1">
    <location>
        <position position="199"/>
    </location>
    <ligand>
        <name>5-phospho-alpha-D-ribose 1-diphosphate</name>
        <dbReference type="ChEBI" id="CHEBI:58017"/>
    </ligand>
</feature>
<proteinExistence type="inferred from homology"/>
<gene>
    <name evidence="1" type="primary">upp</name>
    <name type="ordered locus">BOV_A1005</name>
</gene>
<dbReference type="EC" id="2.4.2.9" evidence="1"/>
<dbReference type="EMBL" id="CP000709">
    <property type="protein sequence ID" value="ABQ62491.1"/>
    <property type="molecule type" value="Genomic_DNA"/>
</dbReference>
<dbReference type="RefSeq" id="WP_004687025.1">
    <property type="nucleotide sequence ID" value="NC_009504.1"/>
</dbReference>
<dbReference type="SMR" id="A5VVW9"/>
<dbReference type="GeneID" id="97534889"/>
<dbReference type="KEGG" id="bov:BOV_A1005"/>
<dbReference type="HOGENOM" id="CLU_067096_2_2_5"/>
<dbReference type="PhylomeDB" id="A5VVW9"/>
<dbReference type="UniPathway" id="UPA00574">
    <property type="reaction ID" value="UER00636"/>
</dbReference>
<dbReference type="Proteomes" id="UP000006383">
    <property type="component" value="Chromosome II"/>
</dbReference>
<dbReference type="GO" id="GO:0005525">
    <property type="term" value="F:GTP binding"/>
    <property type="evidence" value="ECO:0007669"/>
    <property type="project" value="UniProtKB-KW"/>
</dbReference>
<dbReference type="GO" id="GO:0000287">
    <property type="term" value="F:magnesium ion binding"/>
    <property type="evidence" value="ECO:0007669"/>
    <property type="project" value="UniProtKB-UniRule"/>
</dbReference>
<dbReference type="GO" id="GO:0004845">
    <property type="term" value="F:uracil phosphoribosyltransferase activity"/>
    <property type="evidence" value="ECO:0007669"/>
    <property type="project" value="UniProtKB-UniRule"/>
</dbReference>
<dbReference type="GO" id="GO:0044206">
    <property type="term" value="P:UMP salvage"/>
    <property type="evidence" value="ECO:0007669"/>
    <property type="project" value="UniProtKB-UniRule"/>
</dbReference>
<dbReference type="GO" id="GO:0006223">
    <property type="term" value="P:uracil salvage"/>
    <property type="evidence" value="ECO:0007669"/>
    <property type="project" value="InterPro"/>
</dbReference>
<dbReference type="CDD" id="cd06223">
    <property type="entry name" value="PRTases_typeI"/>
    <property type="match status" value="1"/>
</dbReference>
<dbReference type="FunFam" id="3.40.50.2020:FF:000003">
    <property type="entry name" value="Uracil phosphoribosyltransferase"/>
    <property type="match status" value="1"/>
</dbReference>
<dbReference type="Gene3D" id="3.40.50.2020">
    <property type="match status" value="1"/>
</dbReference>
<dbReference type="HAMAP" id="MF_01218_B">
    <property type="entry name" value="Upp_B"/>
    <property type="match status" value="1"/>
</dbReference>
<dbReference type="InterPro" id="IPR000836">
    <property type="entry name" value="PRibTrfase_dom"/>
</dbReference>
<dbReference type="InterPro" id="IPR029057">
    <property type="entry name" value="PRTase-like"/>
</dbReference>
<dbReference type="InterPro" id="IPR034332">
    <property type="entry name" value="Upp_B"/>
</dbReference>
<dbReference type="InterPro" id="IPR050054">
    <property type="entry name" value="UPRTase/APRTase"/>
</dbReference>
<dbReference type="InterPro" id="IPR005765">
    <property type="entry name" value="Ura_phspho_trans"/>
</dbReference>
<dbReference type="NCBIfam" id="NF001097">
    <property type="entry name" value="PRK00129.1"/>
    <property type="match status" value="1"/>
</dbReference>
<dbReference type="NCBIfam" id="TIGR01091">
    <property type="entry name" value="upp"/>
    <property type="match status" value="1"/>
</dbReference>
<dbReference type="PANTHER" id="PTHR32315">
    <property type="entry name" value="ADENINE PHOSPHORIBOSYLTRANSFERASE"/>
    <property type="match status" value="1"/>
</dbReference>
<dbReference type="PANTHER" id="PTHR32315:SF4">
    <property type="entry name" value="URACIL PHOSPHORIBOSYLTRANSFERASE, CHLOROPLASTIC"/>
    <property type="match status" value="1"/>
</dbReference>
<dbReference type="Pfam" id="PF14681">
    <property type="entry name" value="UPRTase"/>
    <property type="match status" value="1"/>
</dbReference>
<dbReference type="SUPFAM" id="SSF53271">
    <property type="entry name" value="PRTase-like"/>
    <property type="match status" value="1"/>
</dbReference>
<name>UPP_BRUO2</name>
<evidence type="ECO:0000255" key="1">
    <source>
        <dbReference type="HAMAP-Rule" id="MF_01218"/>
    </source>
</evidence>
<organism>
    <name type="scientific">Brucella ovis (strain ATCC 25840 / 63/290 / NCTC 10512)</name>
    <dbReference type="NCBI Taxonomy" id="444178"/>
    <lineage>
        <taxon>Bacteria</taxon>
        <taxon>Pseudomonadati</taxon>
        <taxon>Pseudomonadota</taxon>
        <taxon>Alphaproteobacteria</taxon>
        <taxon>Hyphomicrobiales</taxon>
        <taxon>Brucellaceae</taxon>
        <taxon>Brucella/Ochrobactrum group</taxon>
        <taxon>Brucella</taxon>
    </lineage>
</organism>
<sequence length="208" mass="23047">MGVTVVSHPLVQHKLTIMRKKETSTASFRRLLKEISLLLCYEVTRNLELTTMSIETPLMPMEAPVLEGKKLVFASILRAGNGLLEGMLDLVPAARVAHIGLYRDHDTLQPIEYYFKAPEDIVNRLVIVVDPMLATANSAIAAIDKLKERGATNIRFLCLLAAPEGIERFTKAHPDVEVFTASIDERLDEKGYIVPGLGDAGDRMYGTK</sequence>
<comment type="function">
    <text evidence="1">Catalyzes the conversion of uracil and 5-phospho-alpha-D-ribose 1-diphosphate (PRPP) to UMP and diphosphate.</text>
</comment>
<comment type="catalytic activity">
    <reaction evidence="1">
        <text>UMP + diphosphate = 5-phospho-alpha-D-ribose 1-diphosphate + uracil</text>
        <dbReference type="Rhea" id="RHEA:13017"/>
        <dbReference type="ChEBI" id="CHEBI:17568"/>
        <dbReference type="ChEBI" id="CHEBI:33019"/>
        <dbReference type="ChEBI" id="CHEBI:57865"/>
        <dbReference type="ChEBI" id="CHEBI:58017"/>
        <dbReference type="EC" id="2.4.2.9"/>
    </reaction>
</comment>
<comment type="cofactor">
    <cofactor evidence="1">
        <name>Mg(2+)</name>
        <dbReference type="ChEBI" id="CHEBI:18420"/>
    </cofactor>
    <text evidence="1">Binds 1 Mg(2+) ion per subunit. The magnesium is bound as Mg-PRPP.</text>
</comment>
<comment type="activity regulation">
    <text evidence="1">Allosterically activated by GTP.</text>
</comment>
<comment type="pathway">
    <text evidence="1">Pyrimidine metabolism; UMP biosynthesis via salvage pathway; UMP from uracil: step 1/1.</text>
</comment>
<comment type="similarity">
    <text evidence="1">Belongs to the UPRTase family.</text>
</comment>